<organism>
    <name type="scientific">Schizosaccharomyces pombe (strain 972 / ATCC 24843)</name>
    <name type="common">Fission yeast</name>
    <dbReference type="NCBI Taxonomy" id="284812"/>
    <lineage>
        <taxon>Eukaryota</taxon>
        <taxon>Fungi</taxon>
        <taxon>Dikarya</taxon>
        <taxon>Ascomycota</taxon>
        <taxon>Taphrinomycotina</taxon>
        <taxon>Schizosaccharomycetes</taxon>
        <taxon>Schizosaccharomycetales</taxon>
        <taxon>Schizosaccharomycetaceae</taxon>
        <taxon>Schizosaccharomyces</taxon>
    </lineage>
</organism>
<keyword id="KW-0903">Direct protein sequencing</keyword>
<keyword id="KW-0227">DNA damage</keyword>
<keyword id="KW-0233">DNA recombination</keyword>
<keyword id="KW-0234">DNA repair</keyword>
<keyword id="KW-0469">Meiosis</keyword>
<keyword id="KW-0539">Nucleus</keyword>
<keyword id="KW-1185">Reference proteome</keyword>
<keyword id="KW-0832">Ubl conjugation</keyword>
<gene>
    <name type="primary">nse3</name>
    <name type="ORF">SPCC645.04</name>
</gene>
<proteinExistence type="evidence at protein level"/>
<sequence length="328" mass="37276">MSQLSFTGKSSSKGRSRLTQEVRPTASQIIADEEASDLDEYEEDLEGSGNEDDFGPSMSRSSRGRKRRKGDPLELQSQFEERNETDAINFQLLVRNVVRYAICSQTSHNTITRKDIVQKAFPEGTSRNLFQSVFEEADRQLQLSFGFRLVAVTQSNRKKDMAVSQLRRPATSNANSSNLHRYWVLRSTLPMELQKDSRLIVDSVLDTAYYGFLMTVIAFIAVSHCSVGHSELQSFLQELLTEEETTPLHLDITRSLSLLVRQGYLDRVKDDTHNQFVYYIGSRAVTEISIEGLKSFVTEFFPDSDIDMDALLTEYRQEYQNQSSSSAA</sequence>
<evidence type="ECO:0000256" key="1">
    <source>
        <dbReference type="SAM" id="MobiDB-lite"/>
    </source>
</evidence>
<evidence type="ECO:0000269" key="2">
    <source>
    </source>
</evidence>
<evidence type="ECO:0000269" key="3">
    <source>
    </source>
</evidence>
<evidence type="ECO:0000269" key="4">
    <source>
    </source>
</evidence>
<evidence type="ECO:0000269" key="5">
    <source>
    </source>
</evidence>
<protein>
    <recommendedName>
        <fullName>Non-structural maintenance of chromosome element 3</fullName>
        <shortName>Non-SMC element 3</shortName>
    </recommendedName>
</protein>
<accession>Q9Y7U4</accession>
<name>NSE3_SCHPO</name>
<feature type="chain" id="PRO_0000057961" description="Non-structural maintenance of chromosome element 3">
    <location>
        <begin position="1"/>
        <end position="328"/>
    </location>
</feature>
<feature type="region of interest" description="Disordered" evidence="1">
    <location>
        <begin position="1"/>
        <end position="80"/>
    </location>
</feature>
<feature type="compositionally biased region" description="Polar residues" evidence="1">
    <location>
        <begin position="1"/>
        <end position="19"/>
    </location>
</feature>
<feature type="compositionally biased region" description="Acidic residues" evidence="1">
    <location>
        <begin position="31"/>
        <end position="54"/>
    </location>
</feature>
<comment type="function">
    <text evidence="2">Acts in a DNA repair pathway for removal of UV-induced DNA damage that is distinct from classical nucleotide excision repair and in repair of ionizing radiation damage. Functions in homologous recombination repair of DNA double strand breaks and in recovery of stalled replication forks. Plays a critical role in meiosis.</text>
</comment>
<comment type="subunit">
    <text>Two subcomplexes smc5-smc6-nse2 and nse1-nse3-nse4 exist. These subcomplexes are then brought together via a number of interactions, forming the Smc5-Smc6 complex.</text>
</comment>
<comment type="interaction">
    <interactant intactId="EBI-605466">
        <id>Q9Y7U4</id>
    </interactant>
    <interactant intactId="EBI-605440">
        <id>Q53EK2</id>
        <label>nse1</label>
    </interactant>
    <organismsDiffer>false</organismsDiffer>
    <experiments>9</experiments>
</comment>
<comment type="interaction">
    <interactant intactId="EBI-605466">
        <id>Q9Y7U4</id>
    </interactant>
    <interactant intactId="EBI-605449">
        <id>Q4PIR3</id>
        <label>nse2</label>
    </interactant>
    <organismsDiffer>false</organismsDiffer>
    <experiments>2</experiments>
</comment>
<comment type="interaction">
    <interactant intactId="EBI-605466">
        <id>Q9Y7U4</id>
    </interactant>
    <interactant intactId="EBI-605484">
        <id>Q6BDR8</id>
        <label>nse4</label>
    </interactant>
    <organismsDiffer>false</organismsDiffer>
    <experiments>7</experiments>
</comment>
<comment type="interaction">
    <interactant intactId="EBI-605466">
        <id>Q9Y7U4</id>
    </interactant>
    <interactant intactId="EBI-603756">
        <id>O13710</id>
        <label>smc5</label>
    </interactant>
    <organismsDiffer>false</organismsDiffer>
    <experiments>5</experiments>
</comment>
<comment type="interaction">
    <interactant intactId="EBI-605466">
        <id>Q9Y7U4</id>
    </interactant>
    <interactant intactId="EBI-603745">
        <id>P53692</id>
        <label>smc6</label>
    </interactant>
    <organismsDiffer>false</organismsDiffer>
    <experiments>5</experiments>
</comment>
<comment type="subcellular location">
    <subcellularLocation>
        <location evidence="2 3 5">Nucleus</location>
    </subcellularLocation>
</comment>
<comment type="PTM">
    <text evidence="4">Sumoylated by nse2.</text>
</comment>
<reference key="1">
    <citation type="journal article" date="2002" name="Nature">
        <title>The genome sequence of Schizosaccharomyces pombe.</title>
        <authorList>
            <person name="Wood V."/>
            <person name="Gwilliam R."/>
            <person name="Rajandream M.A."/>
            <person name="Lyne M.H."/>
            <person name="Lyne R."/>
            <person name="Stewart A."/>
            <person name="Sgouros J.G."/>
            <person name="Peat N."/>
            <person name="Hayles J."/>
            <person name="Baker S.G."/>
            <person name="Basham D."/>
            <person name="Bowman S."/>
            <person name="Brooks K."/>
            <person name="Brown D."/>
            <person name="Brown S."/>
            <person name="Chillingworth T."/>
            <person name="Churcher C.M."/>
            <person name="Collins M."/>
            <person name="Connor R."/>
            <person name="Cronin A."/>
            <person name="Davis P."/>
            <person name="Feltwell T."/>
            <person name="Fraser A."/>
            <person name="Gentles S."/>
            <person name="Goble A."/>
            <person name="Hamlin N."/>
            <person name="Harris D.E."/>
            <person name="Hidalgo J."/>
            <person name="Hodgson G."/>
            <person name="Holroyd S."/>
            <person name="Hornsby T."/>
            <person name="Howarth S."/>
            <person name="Huckle E.J."/>
            <person name="Hunt S."/>
            <person name="Jagels K."/>
            <person name="James K.D."/>
            <person name="Jones L."/>
            <person name="Jones M."/>
            <person name="Leather S."/>
            <person name="McDonald S."/>
            <person name="McLean J."/>
            <person name="Mooney P."/>
            <person name="Moule S."/>
            <person name="Mungall K.L."/>
            <person name="Murphy L.D."/>
            <person name="Niblett D."/>
            <person name="Odell C."/>
            <person name="Oliver K."/>
            <person name="O'Neil S."/>
            <person name="Pearson D."/>
            <person name="Quail M.A."/>
            <person name="Rabbinowitsch E."/>
            <person name="Rutherford K.M."/>
            <person name="Rutter S."/>
            <person name="Saunders D."/>
            <person name="Seeger K."/>
            <person name="Sharp S."/>
            <person name="Skelton J."/>
            <person name="Simmonds M.N."/>
            <person name="Squares R."/>
            <person name="Squares S."/>
            <person name="Stevens K."/>
            <person name="Taylor K."/>
            <person name="Taylor R.G."/>
            <person name="Tivey A."/>
            <person name="Walsh S.V."/>
            <person name="Warren T."/>
            <person name="Whitehead S."/>
            <person name="Woodward J.R."/>
            <person name="Volckaert G."/>
            <person name="Aert R."/>
            <person name="Robben J."/>
            <person name="Grymonprez B."/>
            <person name="Weltjens I."/>
            <person name="Vanstreels E."/>
            <person name="Rieger M."/>
            <person name="Schaefer M."/>
            <person name="Mueller-Auer S."/>
            <person name="Gabel C."/>
            <person name="Fuchs M."/>
            <person name="Duesterhoeft A."/>
            <person name="Fritzc C."/>
            <person name="Holzer E."/>
            <person name="Moestl D."/>
            <person name="Hilbert H."/>
            <person name="Borzym K."/>
            <person name="Langer I."/>
            <person name="Beck A."/>
            <person name="Lehrach H."/>
            <person name="Reinhardt R."/>
            <person name="Pohl T.M."/>
            <person name="Eger P."/>
            <person name="Zimmermann W."/>
            <person name="Wedler H."/>
            <person name="Wambutt R."/>
            <person name="Purnelle B."/>
            <person name="Goffeau A."/>
            <person name="Cadieu E."/>
            <person name="Dreano S."/>
            <person name="Gloux S."/>
            <person name="Lelaure V."/>
            <person name="Mottier S."/>
            <person name="Galibert F."/>
            <person name="Aves S.J."/>
            <person name="Xiang Z."/>
            <person name="Hunt C."/>
            <person name="Moore K."/>
            <person name="Hurst S.M."/>
            <person name="Lucas M."/>
            <person name="Rochet M."/>
            <person name="Gaillardin C."/>
            <person name="Tallada V.A."/>
            <person name="Garzon A."/>
            <person name="Thode G."/>
            <person name="Daga R.R."/>
            <person name="Cruzado L."/>
            <person name="Jimenez J."/>
            <person name="Sanchez M."/>
            <person name="del Rey F."/>
            <person name="Benito J."/>
            <person name="Dominguez A."/>
            <person name="Revuelta J.L."/>
            <person name="Moreno S."/>
            <person name="Armstrong J."/>
            <person name="Forsburg S.L."/>
            <person name="Cerutti L."/>
            <person name="Lowe T."/>
            <person name="McCombie W.R."/>
            <person name="Paulsen I."/>
            <person name="Potashkin J."/>
            <person name="Shpakovski G.V."/>
            <person name="Ussery D."/>
            <person name="Barrell B.G."/>
            <person name="Nurse P."/>
        </authorList>
    </citation>
    <scope>NUCLEOTIDE SEQUENCE [LARGE SCALE GENOMIC DNA]</scope>
    <source>
        <strain>972 / ATCC 24843</strain>
    </source>
</reference>
<reference key="2">
    <citation type="journal article" date="2004" name="Mol. Biol. Cell">
        <title>Nse1, Nse2, and a novel subunit of the Smc5-Smc6 complex, Nse3, play a crucial role in meiosis.</title>
        <authorList>
            <person name="Pebernard S."/>
            <person name="McDonald W.H."/>
            <person name="Pavlova Y."/>
            <person name="Yates J.R. III"/>
            <person name="Boddy M.N."/>
        </authorList>
    </citation>
    <scope>PARTIAL PROTEIN SEQUENCE</scope>
    <scope>FUNCTION</scope>
    <scope>INTERACTION WITH NSE1</scope>
    <scope>SUBCELLULAR LOCATION</scope>
</reference>
<reference key="3">
    <citation type="journal article" date="2006" name="Mol. Cell. Biol.">
        <title>The Nse5-Nse6 dimer mediates DNA repair roles of the Smc5-Smc6 complex.</title>
        <authorList>
            <person name="Pebernard S."/>
            <person name="Wohlschlegel J."/>
            <person name="McDonald W.H."/>
            <person name="Yates J.R. III"/>
            <person name="Boddy M.N."/>
        </authorList>
    </citation>
    <scope>PARTIAL PROTEIN SEQUENCE</scope>
    <scope>IDENTIFICATION BY MASS SPECTROMETRY</scope>
</reference>
<reference key="4">
    <citation type="journal article" date="2005" name="Mol. Cell. Biol.">
        <title>Composition and architecture of the Schizosaccharomyces pombe Rad18 (Smc5-6) complex.</title>
        <authorList>
            <person name="Sergeant J."/>
            <person name="Taylor E."/>
            <person name="Palecek J."/>
            <person name="Fousteri M."/>
            <person name="Andrews E.A."/>
            <person name="Sweeney S."/>
            <person name="Shinagawa H."/>
            <person name="Watts F.Z."/>
            <person name="Lehmann A.R."/>
        </authorList>
    </citation>
    <scope>INTERACTION WITH NSE1; NSE2 AND NSE4</scope>
    <scope>SUBCELLULAR LOCATION</scope>
</reference>
<reference key="5">
    <citation type="journal article" date="2005" name="Mol. Cell. Biol.">
        <title>Nse2, a component of the Smc5-6 complex, is a SUMO ligase required for the response to DNA damage.</title>
        <authorList>
            <person name="Andrews E.A."/>
            <person name="Palecek J."/>
            <person name="Sergeant J."/>
            <person name="Taylor E."/>
            <person name="Lehmann A.R."/>
            <person name="Watts F.Z."/>
        </authorList>
    </citation>
    <scope>SUMOYLATION BY NSE2</scope>
</reference>
<reference key="6">
    <citation type="journal article" date="2006" name="Nat. Biotechnol.">
        <title>ORFeome cloning and global analysis of protein localization in the fission yeast Schizosaccharomyces pombe.</title>
        <authorList>
            <person name="Matsuyama A."/>
            <person name="Arai R."/>
            <person name="Yashiroda Y."/>
            <person name="Shirai A."/>
            <person name="Kamata A."/>
            <person name="Sekido S."/>
            <person name="Kobayashi Y."/>
            <person name="Hashimoto A."/>
            <person name="Hamamoto M."/>
            <person name="Hiraoka Y."/>
            <person name="Horinouchi S."/>
            <person name="Yoshida M."/>
        </authorList>
    </citation>
    <scope>SUBCELLULAR LOCATION [LARGE SCALE ANALYSIS]</scope>
</reference>
<dbReference type="EMBL" id="CU329672">
    <property type="protein sequence ID" value="CAB39900.1"/>
    <property type="molecule type" value="Genomic_DNA"/>
</dbReference>
<dbReference type="PIR" id="T41521">
    <property type="entry name" value="T41521"/>
</dbReference>
<dbReference type="RefSeq" id="NP_588113.1">
    <property type="nucleotide sequence ID" value="NM_001023103.2"/>
</dbReference>
<dbReference type="SMR" id="Q9Y7U4"/>
<dbReference type="BioGRID" id="275999">
    <property type="interactions" value="12"/>
</dbReference>
<dbReference type="ComplexPortal" id="CPX-25736">
    <property type="entry name" value="SMC5-SMC6 SUMO ligase complex"/>
</dbReference>
<dbReference type="FunCoup" id="Q9Y7U4">
    <property type="interactions" value="266"/>
</dbReference>
<dbReference type="IntAct" id="Q9Y7U4">
    <property type="interactions" value="6"/>
</dbReference>
<dbReference type="STRING" id="284812.Q9Y7U4"/>
<dbReference type="iPTMnet" id="Q9Y7U4"/>
<dbReference type="PaxDb" id="4896-SPCC645.04.1"/>
<dbReference type="EnsemblFungi" id="SPCC645.04.1">
    <property type="protein sequence ID" value="SPCC645.04.1:pep"/>
    <property type="gene ID" value="SPCC645.04"/>
</dbReference>
<dbReference type="GeneID" id="2539436"/>
<dbReference type="KEGG" id="spo:2539436"/>
<dbReference type="PomBase" id="SPCC645.04">
    <property type="gene designation" value="nse3"/>
</dbReference>
<dbReference type="VEuPathDB" id="FungiDB:SPCC645.04"/>
<dbReference type="eggNOG" id="KOG4562">
    <property type="taxonomic scope" value="Eukaryota"/>
</dbReference>
<dbReference type="HOGENOM" id="CLU_829383_0_0_1"/>
<dbReference type="InParanoid" id="Q9Y7U4"/>
<dbReference type="OMA" id="GMQMVEQ"/>
<dbReference type="PhylomeDB" id="Q9Y7U4"/>
<dbReference type="Reactome" id="R-SPO-114608">
    <property type="pathway name" value="Platelet degranulation"/>
</dbReference>
<dbReference type="Reactome" id="R-SPO-3108214">
    <property type="pathway name" value="SUMOylation of DNA damage response and repair proteins"/>
</dbReference>
<dbReference type="PRO" id="PR:Q9Y7U4"/>
<dbReference type="Proteomes" id="UP000002485">
    <property type="component" value="Chromosome III"/>
</dbReference>
<dbReference type="GO" id="GO:0005634">
    <property type="term" value="C:nucleus"/>
    <property type="evidence" value="ECO:0000314"/>
    <property type="project" value="PomBase"/>
</dbReference>
<dbReference type="GO" id="GO:0030915">
    <property type="term" value="C:Smc5-Smc6 complex"/>
    <property type="evidence" value="ECO:0000314"/>
    <property type="project" value="PomBase"/>
</dbReference>
<dbReference type="GO" id="GO:0003690">
    <property type="term" value="F:double-stranded DNA binding"/>
    <property type="evidence" value="ECO:0000314"/>
    <property type="project" value="PomBase"/>
</dbReference>
<dbReference type="GO" id="GO:0006281">
    <property type="term" value="P:DNA repair"/>
    <property type="evidence" value="ECO:0000318"/>
    <property type="project" value="GO_Central"/>
</dbReference>
<dbReference type="GO" id="GO:0000724">
    <property type="term" value="P:double-strand break repair via homologous recombination"/>
    <property type="evidence" value="ECO:0000316"/>
    <property type="project" value="PomBase"/>
</dbReference>
<dbReference type="GO" id="GO:0051321">
    <property type="term" value="P:meiotic cell cycle"/>
    <property type="evidence" value="ECO:0007669"/>
    <property type="project" value="UniProtKB-KW"/>
</dbReference>
<dbReference type="Gene3D" id="1.10.10.1200">
    <property type="entry name" value="MAGE homology domain, winged helix WH1 motif"/>
    <property type="match status" value="1"/>
</dbReference>
<dbReference type="Gene3D" id="1.10.10.1210">
    <property type="entry name" value="MAGE homology domain, winged helix WH2 motif"/>
    <property type="match status" value="1"/>
</dbReference>
<dbReference type="InterPro" id="IPR037445">
    <property type="entry name" value="MAGE"/>
</dbReference>
<dbReference type="InterPro" id="IPR041898">
    <property type="entry name" value="MAGE_WH1"/>
</dbReference>
<dbReference type="InterPro" id="IPR041899">
    <property type="entry name" value="MAGE_WH2"/>
</dbReference>
<dbReference type="InterPro" id="IPR002190">
    <property type="entry name" value="MHD_dom"/>
</dbReference>
<dbReference type="PANTHER" id="PTHR11736">
    <property type="entry name" value="MELANOMA-ASSOCIATED ANTIGEN MAGE ANTIGEN"/>
    <property type="match status" value="1"/>
</dbReference>
<dbReference type="PANTHER" id="PTHR11736:SF14">
    <property type="entry name" value="NSE3 HOMOLOG, SMC5-SMC6 COMPLEX COMPONENT"/>
    <property type="match status" value="1"/>
</dbReference>
<dbReference type="Pfam" id="PF01454">
    <property type="entry name" value="MAGE"/>
    <property type="match status" value="1"/>
</dbReference>
<dbReference type="SMART" id="SM01373">
    <property type="entry name" value="MAGE"/>
    <property type="match status" value="1"/>
</dbReference>